<sequence>MFLVLERKMRTHQVFPLPLLLVIASVASENASTSRGCGLDLLPQYVSLCDLDAIWGIVVEAVAGAGALITLLLMLILLVRLPFIKDKERKRPVCLHFLFLLGTLGLFGLTFAFIIQMDETICSIRRFLWGVLFALCFSCLLSQAWRVRRLVRQGTSPASWQLVSLALCLMLVQVIIATEWLVLTVLRDTKPACAYEPMDFVMALIYDMVLLAITLAQSLFTLCGKFKRWKVNGAFILVTTFLSALIWVVWMTMYLFGNSLIKQGDAWSDPTLAITLAASGWVFVIFHAIPEIHYTLLPPLQENPPNYFDTSQPRMRETAFDEEMHLPRAYMENKAFSMDEHNAALRSAVGFSNGSLEQRSSSLGKKPSSLGNRPSAPFRSNVYQPTEMAVVLNGGTIPTAPPSHTGRHHW</sequence>
<comment type="function">
    <text evidence="1">G-protein coupled receptor involved in the regulation of cell volume.</text>
</comment>
<comment type="subcellular location">
    <subcellularLocation>
        <location evidence="1">Cell membrane</location>
        <topology evidence="1">Multi-pass membrane protein</topology>
    </subcellularLocation>
    <subcellularLocation>
        <location evidence="1">Cytoplasmic vesicle membrane</location>
        <topology evidence="1">Multi-pass membrane protein</topology>
    </subcellularLocation>
    <text evidence="1">Localized in the plasma membrane and perinuclear vesicles.</text>
</comment>
<comment type="similarity">
    <text evidence="4">Belongs to the G-protein coupled receptor 3 family.</text>
</comment>
<proteinExistence type="evidence at protein level"/>
<organism>
    <name type="scientific">Mus musculus</name>
    <name type="common">Mouse</name>
    <dbReference type="NCBI Taxonomy" id="10090"/>
    <lineage>
        <taxon>Eukaryota</taxon>
        <taxon>Metazoa</taxon>
        <taxon>Chordata</taxon>
        <taxon>Craniata</taxon>
        <taxon>Vertebrata</taxon>
        <taxon>Euteleostomi</taxon>
        <taxon>Mammalia</taxon>
        <taxon>Eutheria</taxon>
        <taxon>Euarchontoglires</taxon>
        <taxon>Glires</taxon>
        <taxon>Rodentia</taxon>
        <taxon>Myomorpha</taxon>
        <taxon>Muroidea</taxon>
        <taxon>Muridae</taxon>
        <taxon>Murinae</taxon>
        <taxon>Mus</taxon>
        <taxon>Mus</taxon>
    </lineage>
</organism>
<feature type="signal peptide" evidence="2">
    <location>
        <begin position="1"/>
        <end position="28"/>
    </location>
</feature>
<feature type="chain" id="PRO_0000012966" description="G-protein coupled receptor family C group 5 member B">
    <location>
        <begin position="29"/>
        <end position="410"/>
    </location>
</feature>
<feature type="topological domain" description="Extracellular" evidence="2">
    <location>
        <begin position="29"/>
        <end position="56"/>
    </location>
</feature>
<feature type="transmembrane region" description="Helical; Name=1" evidence="2">
    <location>
        <begin position="57"/>
        <end position="77"/>
    </location>
</feature>
<feature type="topological domain" description="Cytoplasmic" evidence="2">
    <location>
        <begin position="78"/>
        <end position="94"/>
    </location>
</feature>
<feature type="transmembrane region" description="Helical; Name=2" evidence="2">
    <location>
        <begin position="95"/>
        <end position="115"/>
    </location>
</feature>
<feature type="topological domain" description="Extracellular" evidence="2">
    <location>
        <begin position="116"/>
        <end position="126"/>
    </location>
</feature>
<feature type="transmembrane region" description="Helical; Name=3" evidence="2">
    <location>
        <begin position="127"/>
        <end position="147"/>
    </location>
</feature>
<feature type="topological domain" description="Cytoplasmic" evidence="2">
    <location>
        <begin position="148"/>
        <end position="164"/>
    </location>
</feature>
<feature type="transmembrane region" description="Helical; Name=4" evidence="2">
    <location>
        <begin position="165"/>
        <end position="185"/>
    </location>
</feature>
<feature type="topological domain" description="Extracellular" evidence="2">
    <location>
        <begin position="186"/>
        <end position="199"/>
    </location>
</feature>
<feature type="transmembrane region" description="Helical; Name=5" evidence="2">
    <location>
        <begin position="200"/>
        <end position="220"/>
    </location>
</feature>
<feature type="topological domain" description="Cytoplasmic" evidence="2">
    <location>
        <begin position="221"/>
        <end position="234"/>
    </location>
</feature>
<feature type="transmembrane region" description="Helical; Name=6" evidence="2">
    <location>
        <begin position="235"/>
        <end position="255"/>
    </location>
</feature>
<feature type="topological domain" description="Extracellular" evidence="2">
    <location>
        <begin position="256"/>
        <end position="271"/>
    </location>
</feature>
<feature type="transmembrane region" description="Helical; Name=7" evidence="2">
    <location>
        <begin position="272"/>
        <end position="292"/>
    </location>
</feature>
<feature type="topological domain" description="Cytoplasmic" evidence="2">
    <location>
        <begin position="293"/>
        <end position="410"/>
    </location>
</feature>
<feature type="region of interest" description="Disordered" evidence="3">
    <location>
        <begin position="356"/>
        <end position="381"/>
    </location>
</feature>
<feature type="compositionally biased region" description="Low complexity" evidence="3">
    <location>
        <begin position="360"/>
        <end position="371"/>
    </location>
</feature>
<feature type="modified residue" description="Phosphoserine" evidence="5">
    <location>
        <position position="355"/>
    </location>
</feature>
<feature type="glycosylation site" description="N-linked (GlcNAc...) asparagine" evidence="2">
    <location>
        <position position="30"/>
    </location>
</feature>
<feature type="sequence conflict" description="In Ref. 2; BAC27669." evidence="4" ref="2">
    <original>D</original>
    <variation>G</variation>
    <location>
        <position position="118"/>
    </location>
</feature>
<accession>Q923Z0</accession>
<accession>Q8CCV3</accession>
<protein>
    <recommendedName>
        <fullName>G-protein coupled receptor family C group 5 member B</fullName>
    </recommendedName>
    <alternativeName>
        <fullName>Retinoic acid-induced gene 2 protein</fullName>
        <shortName>RAIG-2</shortName>
    </alternativeName>
</protein>
<gene>
    <name type="primary">Gprc5b</name>
    <name type="synonym">Raig2</name>
</gene>
<reference key="1">
    <citation type="submission" date="2001-05" db="EMBL/GenBank/DDBJ databases">
        <title>Molecular cloning and characterization of mouse retinoic acid-inducible orphan G protein-coupled receptors.</title>
        <authorList>
            <person name="Tao Q."/>
            <person name="Lotan R."/>
        </authorList>
    </citation>
    <scope>NUCLEOTIDE SEQUENCE [MRNA]</scope>
</reference>
<reference key="2">
    <citation type="journal article" date="2005" name="Science">
        <title>The transcriptional landscape of the mammalian genome.</title>
        <authorList>
            <person name="Carninci P."/>
            <person name="Kasukawa T."/>
            <person name="Katayama S."/>
            <person name="Gough J."/>
            <person name="Frith M.C."/>
            <person name="Maeda N."/>
            <person name="Oyama R."/>
            <person name="Ravasi T."/>
            <person name="Lenhard B."/>
            <person name="Wells C."/>
            <person name="Kodzius R."/>
            <person name="Shimokawa K."/>
            <person name="Bajic V.B."/>
            <person name="Brenner S.E."/>
            <person name="Batalov S."/>
            <person name="Forrest A.R."/>
            <person name="Zavolan M."/>
            <person name="Davis M.J."/>
            <person name="Wilming L.G."/>
            <person name="Aidinis V."/>
            <person name="Allen J.E."/>
            <person name="Ambesi-Impiombato A."/>
            <person name="Apweiler R."/>
            <person name="Aturaliya R.N."/>
            <person name="Bailey T.L."/>
            <person name="Bansal M."/>
            <person name="Baxter L."/>
            <person name="Beisel K.W."/>
            <person name="Bersano T."/>
            <person name="Bono H."/>
            <person name="Chalk A.M."/>
            <person name="Chiu K.P."/>
            <person name="Choudhary V."/>
            <person name="Christoffels A."/>
            <person name="Clutterbuck D.R."/>
            <person name="Crowe M.L."/>
            <person name="Dalla E."/>
            <person name="Dalrymple B.P."/>
            <person name="de Bono B."/>
            <person name="Della Gatta G."/>
            <person name="di Bernardo D."/>
            <person name="Down T."/>
            <person name="Engstrom P."/>
            <person name="Fagiolini M."/>
            <person name="Faulkner G."/>
            <person name="Fletcher C.F."/>
            <person name="Fukushima T."/>
            <person name="Furuno M."/>
            <person name="Futaki S."/>
            <person name="Gariboldi M."/>
            <person name="Georgii-Hemming P."/>
            <person name="Gingeras T.R."/>
            <person name="Gojobori T."/>
            <person name="Green R.E."/>
            <person name="Gustincich S."/>
            <person name="Harbers M."/>
            <person name="Hayashi Y."/>
            <person name="Hensch T.K."/>
            <person name="Hirokawa N."/>
            <person name="Hill D."/>
            <person name="Huminiecki L."/>
            <person name="Iacono M."/>
            <person name="Ikeo K."/>
            <person name="Iwama A."/>
            <person name="Ishikawa T."/>
            <person name="Jakt M."/>
            <person name="Kanapin A."/>
            <person name="Katoh M."/>
            <person name="Kawasawa Y."/>
            <person name="Kelso J."/>
            <person name="Kitamura H."/>
            <person name="Kitano H."/>
            <person name="Kollias G."/>
            <person name="Krishnan S.P."/>
            <person name="Kruger A."/>
            <person name="Kummerfeld S.K."/>
            <person name="Kurochkin I.V."/>
            <person name="Lareau L.F."/>
            <person name="Lazarevic D."/>
            <person name="Lipovich L."/>
            <person name="Liu J."/>
            <person name="Liuni S."/>
            <person name="McWilliam S."/>
            <person name="Madan Babu M."/>
            <person name="Madera M."/>
            <person name="Marchionni L."/>
            <person name="Matsuda H."/>
            <person name="Matsuzawa S."/>
            <person name="Miki H."/>
            <person name="Mignone F."/>
            <person name="Miyake S."/>
            <person name="Morris K."/>
            <person name="Mottagui-Tabar S."/>
            <person name="Mulder N."/>
            <person name="Nakano N."/>
            <person name="Nakauchi H."/>
            <person name="Ng P."/>
            <person name="Nilsson R."/>
            <person name="Nishiguchi S."/>
            <person name="Nishikawa S."/>
            <person name="Nori F."/>
            <person name="Ohara O."/>
            <person name="Okazaki Y."/>
            <person name="Orlando V."/>
            <person name="Pang K.C."/>
            <person name="Pavan W.J."/>
            <person name="Pavesi G."/>
            <person name="Pesole G."/>
            <person name="Petrovsky N."/>
            <person name="Piazza S."/>
            <person name="Reed J."/>
            <person name="Reid J.F."/>
            <person name="Ring B.Z."/>
            <person name="Ringwald M."/>
            <person name="Rost B."/>
            <person name="Ruan Y."/>
            <person name="Salzberg S.L."/>
            <person name="Sandelin A."/>
            <person name="Schneider C."/>
            <person name="Schoenbach C."/>
            <person name="Sekiguchi K."/>
            <person name="Semple C.A."/>
            <person name="Seno S."/>
            <person name="Sessa L."/>
            <person name="Sheng Y."/>
            <person name="Shibata Y."/>
            <person name="Shimada H."/>
            <person name="Shimada K."/>
            <person name="Silva D."/>
            <person name="Sinclair B."/>
            <person name="Sperling S."/>
            <person name="Stupka E."/>
            <person name="Sugiura K."/>
            <person name="Sultana R."/>
            <person name="Takenaka Y."/>
            <person name="Taki K."/>
            <person name="Tammoja K."/>
            <person name="Tan S.L."/>
            <person name="Tang S."/>
            <person name="Taylor M.S."/>
            <person name="Tegner J."/>
            <person name="Teichmann S.A."/>
            <person name="Ueda H.R."/>
            <person name="van Nimwegen E."/>
            <person name="Verardo R."/>
            <person name="Wei C.L."/>
            <person name="Yagi K."/>
            <person name="Yamanishi H."/>
            <person name="Zabarovsky E."/>
            <person name="Zhu S."/>
            <person name="Zimmer A."/>
            <person name="Hide W."/>
            <person name="Bult C."/>
            <person name="Grimmond S.M."/>
            <person name="Teasdale R.D."/>
            <person name="Liu E.T."/>
            <person name="Brusic V."/>
            <person name="Quackenbush J."/>
            <person name="Wahlestedt C."/>
            <person name="Mattick J.S."/>
            <person name="Hume D.A."/>
            <person name="Kai C."/>
            <person name="Sasaki D."/>
            <person name="Tomaru Y."/>
            <person name="Fukuda S."/>
            <person name="Kanamori-Katayama M."/>
            <person name="Suzuki M."/>
            <person name="Aoki J."/>
            <person name="Arakawa T."/>
            <person name="Iida J."/>
            <person name="Imamura K."/>
            <person name="Itoh M."/>
            <person name="Kato T."/>
            <person name="Kawaji H."/>
            <person name="Kawagashira N."/>
            <person name="Kawashima T."/>
            <person name="Kojima M."/>
            <person name="Kondo S."/>
            <person name="Konno H."/>
            <person name="Nakano K."/>
            <person name="Ninomiya N."/>
            <person name="Nishio T."/>
            <person name="Okada M."/>
            <person name="Plessy C."/>
            <person name="Shibata K."/>
            <person name="Shiraki T."/>
            <person name="Suzuki S."/>
            <person name="Tagami M."/>
            <person name="Waki K."/>
            <person name="Watahiki A."/>
            <person name="Okamura-Oho Y."/>
            <person name="Suzuki H."/>
            <person name="Kawai J."/>
            <person name="Hayashizaki Y."/>
        </authorList>
    </citation>
    <scope>NUCLEOTIDE SEQUENCE [LARGE SCALE MRNA]</scope>
    <source>
        <strain>C57BL/6J</strain>
        <tissue>Medulla oblongata</tissue>
    </source>
</reference>
<reference key="3">
    <citation type="journal article" date="2004" name="Genome Res.">
        <title>The status, quality, and expansion of the NIH full-length cDNA project: the Mammalian Gene Collection (MGC).</title>
        <authorList>
            <consortium name="The MGC Project Team"/>
        </authorList>
    </citation>
    <scope>NUCLEOTIDE SEQUENCE [LARGE SCALE MRNA]</scope>
</reference>
<reference key="4">
    <citation type="journal article" date="2010" name="Cell">
        <title>A tissue-specific atlas of mouse protein phosphorylation and expression.</title>
        <authorList>
            <person name="Huttlin E.L."/>
            <person name="Jedrychowski M.P."/>
            <person name="Elias J.E."/>
            <person name="Goswami T."/>
            <person name="Rad R."/>
            <person name="Beausoleil S.A."/>
            <person name="Villen J."/>
            <person name="Haas W."/>
            <person name="Sowa M.E."/>
            <person name="Gygi S.P."/>
        </authorList>
    </citation>
    <scope>PHOSPHORYLATION [LARGE SCALE ANALYSIS] AT SER-355</scope>
    <scope>IDENTIFICATION BY MASS SPECTROMETRY [LARGE SCALE ANALYSIS]</scope>
    <source>
        <tissue>Brain</tissue>
        <tissue>Brown adipose tissue</tissue>
        <tissue>Kidney</tissue>
    </source>
</reference>
<keyword id="KW-1003">Cell membrane</keyword>
<keyword id="KW-0968">Cytoplasmic vesicle</keyword>
<keyword id="KW-0297">G-protein coupled receptor</keyword>
<keyword id="KW-0325">Glycoprotein</keyword>
<keyword id="KW-0472">Membrane</keyword>
<keyword id="KW-0597">Phosphoprotein</keyword>
<keyword id="KW-0675">Receptor</keyword>
<keyword id="KW-1185">Reference proteome</keyword>
<keyword id="KW-0732">Signal</keyword>
<keyword id="KW-0807">Transducer</keyword>
<keyword id="KW-0812">Transmembrane</keyword>
<keyword id="KW-1133">Transmembrane helix</keyword>
<evidence type="ECO:0000250" key="1">
    <source>
        <dbReference type="UniProtKB" id="Q9NZH0"/>
    </source>
</evidence>
<evidence type="ECO:0000255" key="2"/>
<evidence type="ECO:0000256" key="3">
    <source>
        <dbReference type="SAM" id="MobiDB-lite"/>
    </source>
</evidence>
<evidence type="ECO:0000305" key="4"/>
<evidence type="ECO:0007744" key="5">
    <source>
    </source>
</evidence>
<dbReference type="EMBL" id="AF378831">
    <property type="protein sequence ID" value="AAK58076.1"/>
    <property type="molecule type" value="mRNA"/>
</dbReference>
<dbReference type="EMBL" id="AK032047">
    <property type="protein sequence ID" value="BAC27669.1"/>
    <property type="molecule type" value="mRNA"/>
</dbReference>
<dbReference type="EMBL" id="BC020004">
    <property type="protein sequence ID" value="AAH20004.1"/>
    <property type="molecule type" value="mRNA"/>
</dbReference>
<dbReference type="CCDS" id="CCDS21777.1"/>
<dbReference type="RefSeq" id="NP_071865.1">
    <property type="nucleotide sequence ID" value="NM_022420.2"/>
</dbReference>
<dbReference type="SMR" id="Q923Z0"/>
<dbReference type="CORUM" id="Q923Z0"/>
<dbReference type="FunCoup" id="Q923Z0">
    <property type="interactions" value="454"/>
</dbReference>
<dbReference type="STRING" id="10090.ENSMUSP00000146777"/>
<dbReference type="GlyCosmos" id="Q923Z0">
    <property type="glycosylation" value="1 site, No reported glycans"/>
</dbReference>
<dbReference type="GlyGen" id="Q923Z0">
    <property type="glycosylation" value="1 site"/>
</dbReference>
<dbReference type="iPTMnet" id="Q923Z0"/>
<dbReference type="PhosphoSitePlus" id="Q923Z0"/>
<dbReference type="SwissPalm" id="Q923Z0"/>
<dbReference type="PaxDb" id="10090-ENSMUSP00000008878"/>
<dbReference type="PeptideAtlas" id="Q923Z0"/>
<dbReference type="ProteomicsDB" id="271430"/>
<dbReference type="Pumba" id="Q923Z0"/>
<dbReference type="Antibodypedia" id="12141">
    <property type="antibodies" value="296 antibodies from 30 providers"/>
</dbReference>
<dbReference type="DNASU" id="64297"/>
<dbReference type="Ensembl" id="ENSMUST00000008878.10">
    <property type="protein sequence ID" value="ENSMUSP00000008878.9"/>
    <property type="gene ID" value="ENSMUSG00000008734.10"/>
</dbReference>
<dbReference type="GeneID" id="64297"/>
<dbReference type="KEGG" id="mmu:64297"/>
<dbReference type="UCSC" id="uc009jkx.2">
    <property type="organism name" value="mouse"/>
</dbReference>
<dbReference type="AGR" id="MGI:1927596"/>
<dbReference type="CTD" id="51704"/>
<dbReference type="MGI" id="MGI:1927596">
    <property type="gene designation" value="Gprc5b"/>
</dbReference>
<dbReference type="VEuPathDB" id="HostDB:ENSMUSG00000008734"/>
<dbReference type="eggNOG" id="ENOG502QWT9">
    <property type="taxonomic scope" value="Eukaryota"/>
</dbReference>
<dbReference type="GeneTree" id="ENSGT00950000182961"/>
<dbReference type="HOGENOM" id="CLU_044162_1_1_1"/>
<dbReference type="InParanoid" id="Q923Z0"/>
<dbReference type="OMA" id="GWQLVGM"/>
<dbReference type="OrthoDB" id="9882719at2759"/>
<dbReference type="PhylomeDB" id="Q923Z0"/>
<dbReference type="TreeFam" id="TF321410"/>
<dbReference type="BioGRID-ORCS" id="64297">
    <property type="hits" value="3 hits in 77 CRISPR screens"/>
</dbReference>
<dbReference type="CD-CODE" id="CE726F99">
    <property type="entry name" value="Postsynaptic density"/>
</dbReference>
<dbReference type="ChiTaRS" id="Gprc5b">
    <property type="organism name" value="mouse"/>
</dbReference>
<dbReference type="PRO" id="PR:Q923Z0"/>
<dbReference type="Proteomes" id="UP000000589">
    <property type="component" value="Chromosome 7"/>
</dbReference>
<dbReference type="RNAct" id="Q923Z0">
    <property type="molecule type" value="protein"/>
</dbReference>
<dbReference type="Bgee" id="ENSMUSG00000008734">
    <property type="expression patterns" value="Expressed in epithelium of lens and 226 other cell types or tissues"/>
</dbReference>
<dbReference type="ExpressionAtlas" id="Q923Z0">
    <property type="expression patterns" value="baseline and differential"/>
</dbReference>
<dbReference type="GO" id="GO:0009986">
    <property type="term" value="C:cell surface"/>
    <property type="evidence" value="ECO:0000314"/>
    <property type="project" value="UniProtKB"/>
</dbReference>
<dbReference type="GO" id="GO:0030659">
    <property type="term" value="C:cytoplasmic vesicle membrane"/>
    <property type="evidence" value="ECO:0007669"/>
    <property type="project" value="UniProtKB-SubCell"/>
</dbReference>
<dbReference type="GO" id="GO:0045121">
    <property type="term" value="C:membrane raft"/>
    <property type="evidence" value="ECO:0000314"/>
    <property type="project" value="MGI"/>
</dbReference>
<dbReference type="GO" id="GO:0005886">
    <property type="term" value="C:plasma membrane"/>
    <property type="evidence" value="ECO:0000314"/>
    <property type="project" value="MGI"/>
</dbReference>
<dbReference type="GO" id="GO:0004930">
    <property type="term" value="F:G protein-coupled receptor activity"/>
    <property type="evidence" value="ECO:0007669"/>
    <property type="project" value="UniProtKB-KW"/>
</dbReference>
<dbReference type="GO" id="GO:0030295">
    <property type="term" value="F:protein kinase activator activity"/>
    <property type="evidence" value="ECO:0000266"/>
    <property type="project" value="MGI"/>
</dbReference>
<dbReference type="GO" id="GO:0019901">
    <property type="term" value="F:protein kinase binding"/>
    <property type="evidence" value="ECO:0000353"/>
    <property type="project" value="UniProtKB"/>
</dbReference>
<dbReference type="GO" id="GO:0004860">
    <property type="term" value="F:protein kinase inhibitor activity"/>
    <property type="evidence" value="ECO:0000314"/>
    <property type="project" value="MGI"/>
</dbReference>
<dbReference type="GO" id="GO:0006884">
    <property type="term" value="P:cell volume homeostasis"/>
    <property type="evidence" value="ECO:0000250"/>
    <property type="project" value="UniProtKB"/>
</dbReference>
<dbReference type="GO" id="GO:0042593">
    <property type="term" value="P:glucose homeostasis"/>
    <property type="evidence" value="ECO:0000315"/>
    <property type="project" value="MGI"/>
</dbReference>
<dbReference type="GO" id="GO:0007626">
    <property type="term" value="P:locomotory behavior"/>
    <property type="evidence" value="ECO:0000315"/>
    <property type="project" value="MGI"/>
</dbReference>
<dbReference type="GO" id="GO:0043123">
    <property type="term" value="P:positive regulation of canonical NF-kappaB signal transduction"/>
    <property type="evidence" value="ECO:0000315"/>
    <property type="project" value="UniProtKB"/>
</dbReference>
<dbReference type="GO" id="GO:0090263">
    <property type="term" value="P:positive regulation of canonical Wnt signaling pathway"/>
    <property type="evidence" value="ECO:0000315"/>
    <property type="project" value="UniProtKB"/>
</dbReference>
<dbReference type="GO" id="GO:0050729">
    <property type="term" value="P:positive regulation of inflammatory response"/>
    <property type="evidence" value="ECO:0000315"/>
    <property type="project" value="UniProtKB"/>
</dbReference>
<dbReference type="GO" id="GO:0060907">
    <property type="term" value="P:positive regulation of macrophage cytokine production"/>
    <property type="evidence" value="ECO:0000315"/>
    <property type="project" value="UniProtKB"/>
</dbReference>
<dbReference type="GO" id="GO:0045666">
    <property type="term" value="P:positive regulation of neuron differentiation"/>
    <property type="evidence" value="ECO:0000315"/>
    <property type="project" value="UniProtKB"/>
</dbReference>
<dbReference type="GO" id="GO:0010976">
    <property type="term" value="P:positive regulation of neuron projection development"/>
    <property type="evidence" value="ECO:0000314"/>
    <property type="project" value="MGI"/>
</dbReference>
<dbReference type="GO" id="GO:0061098">
    <property type="term" value="P:positive regulation of protein tyrosine kinase activity"/>
    <property type="evidence" value="ECO:0000315"/>
    <property type="project" value="UniProtKB"/>
</dbReference>
<dbReference type="CDD" id="cd15278">
    <property type="entry name" value="7tmC_RAIG2_GPRC5B"/>
    <property type="match status" value="1"/>
</dbReference>
<dbReference type="InterPro" id="IPR017978">
    <property type="entry name" value="GPCR_3_C"/>
</dbReference>
<dbReference type="InterPro" id="IPR051753">
    <property type="entry name" value="RA-inducible_GPCR3"/>
</dbReference>
<dbReference type="PANTHER" id="PTHR14511">
    <property type="entry name" value="G PROTEIN COUPLED RECEPTOR, CLASS C, GROUP 5"/>
    <property type="match status" value="1"/>
</dbReference>
<dbReference type="PANTHER" id="PTHR14511:SF9">
    <property type="entry name" value="G-PROTEIN COUPLED RECEPTOR FAMILY C GROUP 5 MEMBER B"/>
    <property type="match status" value="1"/>
</dbReference>
<dbReference type="Pfam" id="PF00003">
    <property type="entry name" value="7tm_3"/>
    <property type="match status" value="1"/>
</dbReference>
<dbReference type="PROSITE" id="PS50259">
    <property type="entry name" value="G_PROTEIN_RECEP_F3_4"/>
    <property type="match status" value="1"/>
</dbReference>
<name>GPC5B_MOUSE</name>